<name>RLMN_SYNY3</name>
<dbReference type="EC" id="2.1.1.192" evidence="1"/>
<dbReference type="EMBL" id="BA000022">
    <property type="protein sequence ID" value="BAA10642.1"/>
    <property type="molecule type" value="Genomic_DNA"/>
</dbReference>
<dbReference type="PIR" id="S76698">
    <property type="entry name" value="S76698"/>
</dbReference>
<dbReference type="SMR" id="Q55880"/>
<dbReference type="FunCoup" id="Q55880">
    <property type="interactions" value="480"/>
</dbReference>
<dbReference type="STRING" id="1148.gene:10500146"/>
<dbReference type="PaxDb" id="1148-1208474"/>
<dbReference type="EnsemblBacteria" id="BAA10642">
    <property type="protein sequence ID" value="BAA10642"/>
    <property type="gene ID" value="BAA10642"/>
</dbReference>
<dbReference type="KEGG" id="syn:sll0098"/>
<dbReference type="eggNOG" id="COG0820">
    <property type="taxonomic scope" value="Bacteria"/>
</dbReference>
<dbReference type="InParanoid" id="Q55880"/>
<dbReference type="PhylomeDB" id="Q55880"/>
<dbReference type="Proteomes" id="UP000001425">
    <property type="component" value="Chromosome"/>
</dbReference>
<dbReference type="GO" id="GO:0005737">
    <property type="term" value="C:cytoplasm"/>
    <property type="evidence" value="ECO:0007669"/>
    <property type="project" value="UniProtKB-SubCell"/>
</dbReference>
<dbReference type="GO" id="GO:0051539">
    <property type="term" value="F:4 iron, 4 sulfur cluster binding"/>
    <property type="evidence" value="ECO:0007669"/>
    <property type="project" value="UniProtKB-UniRule"/>
</dbReference>
<dbReference type="GO" id="GO:0046872">
    <property type="term" value="F:metal ion binding"/>
    <property type="evidence" value="ECO:0007669"/>
    <property type="project" value="UniProtKB-KW"/>
</dbReference>
<dbReference type="GO" id="GO:0070040">
    <property type="term" value="F:rRNA (adenine(2503)-C2-)-methyltransferase activity"/>
    <property type="evidence" value="ECO:0007669"/>
    <property type="project" value="UniProtKB-UniRule"/>
</dbReference>
<dbReference type="GO" id="GO:0019843">
    <property type="term" value="F:rRNA binding"/>
    <property type="evidence" value="ECO:0007669"/>
    <property type="project" value="UniProtKB-UniRule"/>
</dbReference>
<dbReference type="GO" id="GO:0002935">
    <property type="term" value="F:tRNA (adenine(37)-C2)-methyltransferase activity"/>
    <property type="evidence" value="ECO:0007669"/>
    <property type="project" value="UniProtKB-UniRule"/>
</dbReference>
<dbReference type="GO" id="GO:0000049">
    <property type="term" value="F:tRNA binding"/>
    <property type="evidence" value="ECO:0007669"/>
    <property type="project" value="UniProtKB-UniRule"/>
</dbReference>
<dbReference type="GO" id="GO:0070475">
    <property type="term" value="P:rRNA base methylation"/>
    <property type="evidence" value="ECO:0000318"/>
    <property type="project" value="GO_Central"/>
</dbReference>
<dbReference type="GO" id="GO:0030488">
    <property type="term" value="P:tRNA methylation"/>
    <property type="evidence" value="ECO:0000318"/>
    <property type="project" value="GO_Central"/>
</dbReference>
<dbReference type="CDD" id="cd01335">
    <property type="entry name" value="Radical_SAM"/>
    <property type="match status" value="1"/>
</dbReference>
<dbReference type="FunFam" id="3.20.20.70:FF:000014">
    <property type="entry name" value="Probable dual-specificity RNA methyltransferase RlmN"/>
    <property type="match status" value="1"/>
</dbReference>
<dbReference type="Gene3D" id="1.10.150.530">
    <property type="match status" value="1"/>
</dbReference>
<dbReference type="Gene3D" id="3.20.20.70">
    <property type="entry name" value="Aldolase class I"/>
    <property type="match status" value="1"/>
</dbReference>
<dbReference type="HAMAP" id="MF_01849">
    <property type="entry name" value="RNA_methyltr_RlmN"/>
    <property type="match status" value="1"/>
</dbReference>
<dbReference type="InterPro" id="IPR013785">
    <property type="entry name" value="Aldolase_TIM"/>
</dbReference>
<dbReference type="InterPro" id="IPR040072">
    <property type="entry name" value="Methyltransferase_A"/>
</dbReference>
<dbReference type="InterPro" id="IPR048641">
    <property type="entry name" value="RlmN_N"/>
</dbReference>
<dbReference type="InterPro" id="IPR027492">
    <property type="entry name" value="RNA_MTrfase_RlmN"/>
</dbReference>
<dbReference type="InterPro" id="IPR004383">
    <property type="entry name" value="rRNA_lsu_MTrfase_RlmN/Cfr"/>
</dbReference>
<dbReference type="InterPro" id="IPR007197">
    <property type="entry name" value="rSAM"/>
</dbReference>
<dbReference type="NCBIfam" id="TIGR00048">
    <property type="entry name" value="rRNA_mod_RlmN"/>
    <property type="match status" value="1"/>
</dbReference>
<dbReference type="PANTHER" id="PTHR30544">
    <property type="entry name" value="23S RRNA METHYLTRANSFERASE"/>
    <property type="match status" value="1"/>
</dbReference>
<dbReference type="PANTHER" id="PTHR30544:SF5">
    <property type="entry name" value="RADICAL SAM CORE DOMAIN-CONTAINING PROTEIN"/>
    <property type="match status" value="1"/>
</dbReference>
<dbReference type="Pfam" id="PF04055">
    <property type="entry name" value="Radical_SAM"/>
    <property type="match status" value="1"/>
</dbReference>
<dbReference type="Pfam" id="PF21016">
    <property type="entry name" value="RlmN_N"/>
    <property type="match status" value="1"/>
</dbReference>
<dbReference type="PIRSF" id="PIRSF006004">
    <property type="entry name" value="CHP00048"/>
    <property type="match status" value="1"/>
</dbReference>
<dbReference type="SFLD" id="SFLDF00275">
    <property type="entry name" value="adenosine_C2_methyltransferase"/>
    <property type="match status" value="1"/>
</dbReference>
<dbReference type="SFLD" id="SFLDS00029">
    <property type="entry name" value="Radical_SAM"/>
    <property type="match status" value="1"/>
</dbReference>
<dbReference type="SUPFAM" id="SSF102114">
    <property type="entry name" value="Radical SAM enzymes"/>
    <property type="match status" value="1"/>
</dbReference>
<dbReference type="PROSITE" id="PS51918">
    <property type="entry name" value="RADICAL_SAM"/>
    <property type="match status" value="1"/>
</dbReference>
<sequence length="350" mass="38857">MAPSPAPLLSLSLPELTDWVQTTGQPAYRGKQIHQWLYQKGARSLTAMTDLPKVWREKNVHYPIGRSVIDHCAVAPDHTRKYLLRLADGLIIETVGIPSSKRLTVCVSSQVGCAMDCNFCATGKGGFIRNLESHEIVDQVLTVQEEFHERVSNVVFMGMGEPLLNLPQVVKAVECLNQVVGIGQRALTISTVGLPGKIRQLADRHLQVTFAVSLHAPNQTLRQSLIPSARHYPLEQLLADCRAYVETTGRRVTFEYVLLAGVNDQPVHAEELAQKLRGFQTHVNLIPYNPISEVDYQRPTEAQINQFAQVLSDHRIAVSVRYSRGVQADAACGQLRASRKEELAELTPMA</sequence>
<gene>
    <name evidence="1" type="primary">rlmN</name>
    <name type="ordered locus">sll0098</name>
</gene>
<comment type="function">
    <text evidence="1">Specifically methylates position 2 of adenine 2503 in 23S rRNA and position 2 of adenine 37 in tRNAs.</text>
</comment>
<comment type="catalytic activity">
    <reaction evidence="1">
        <text>adenosine(2503) in 23S rRNA + 2 reduced [2Fe-2S]-[ferredoxin] + 2 S-adenosyl-L-methionine = 2-methyladenosine(2503) in 23S rRNA + 5'-deoxyadenosine + L-methionine + 2 oxidized [2Fe-2S]-[ferredoxin] + S-adenosyl-L-homocysteine</text>
        <dbReference type="Rhea" id="RHEA:42916"/>
        <dbReference type="Rhea" id="RHEA-COMP:10000"/>
        <dbReference type="Rhea" id="RHEA-COMP:10001"/>
        <dbReference type="Rhea" id="RHEA-COMP:10152"/>
        <dbReference type="Rhea" id="RHEA-COMP:10282"/>
        <dbReference type="ChEBI" id="CHEBI:17319"/>
        <dbReference type="ChEBI" id="CHEBI:33737"/>
        <dbReference type="ChEBI" id="CHEBI:33738"/>
        <dbReference type="ChEBI" id="CHEBI:57844"/>
        <dbReference type="ChEBI" id="CHEBI:57856"/>
        <dbReference type="ChEBI" id="CHEBI:59789"/>
        <dbReference type="ChEBI" id="CHEBI:74411"/>
        <dbReference type="ChEBI" id="CHEBI:74497"/>
        <dbReference type="EC" id="2.1.1.192"/>
    </reaction>
</comment>
<comment type="catalytic activity">
    <reaction evidence="1">
        <text>adenosine(37) in tRNA + 2 reduced [2Fe-2S]-[ferredoxin] + 2 S-adenosyl-L-methionine = 2-methyladenosine(37) in tRNA + 5'-deoxyadenosine + L-methionine + 2 oxidized [2Fe-2S]-[ferredoxin] + S-adenosyl-L-homocysteine</text>
        <dbReference type="Rhea" id="RHEA:43332"/>
        <dbReference type="Rhea" id="RHEA-COMP:10000"/>
        <dbReference type="Rhea" id="RHEA-COMP:10001"/>
        <dbReference type="Rhea" id="RHEA-COMP:10162"/>
        <dbReference type="Rhea" id="RHEA-COMP:10485"/>
        <dbReference type="ChEBI" id="CHEBI:17319"/>
        <dbReference type="ChEBI" id="CHEBI:33737"/>
        <dbReference type="ChEBI" id="CHEBI:33738"/>
        <dbReference type="ChEBI" id="CHEBI:57844"/>
        <dbReference type="ChEBI" id="CHEBI:57856"/>
        <dbReference type="ChEBI" id="CHEBI:59789"/>
        <dbReference type="ChEBI" id="CHEBI:74411"/>
        <dbReference type="ChEBI" id="CHEBI:74497"/>
        <dbReference type="EC" id="2.1.1.192"/>
    </reaction>
</comment>
<comment type="cofactor">
    <cofactor evidence="1">
        <name>[4Fe-4S] cluster</name>
        <dbReference type="ChEBI" id="CHEBI:49883"/>
    </cofactor>
    <text evidence="1">Binds 1 [4Fe-4S] cluster. The cluster is coordinated with 3 cysteines and an exchangeable S-adenosyl-L-methionine.</text>
</comment>
<comment type="subcellular location">
    <subcellularLocation>
        <location evidence="1">Cytoplasm</location>
    </subcellularLocation>
</comment>
<comment type="miscellaneous">
    <text evidence="1">Reaction proceeds by a ping-pong mechanism involving intermediate methylation of a conserved cysteine residue.</text>
</comment>
<comment type="similarity">
    <text evidence="1">Belongs to the radical SAM superfamily. RlmN family.</text>
</comment>
<organism>
    <name type="scientific">Synechocystis sp. (strain ATCC 27184 / PCC 6803 / Kazusa)</name>
    <dbReference type="NCBI Taxonomy" id="1111708"/>
    <lineage>
        <taxon>Bacteria</taxon>
        <taxon>Bacillati</taxon>
        <taxon>Cyanobacteriota</taxon>
        <taxon>Cyanophyceae</taxon>
        <taxon>Synechococcales</taxon>
        <taxon>Merismopediaceae</taxon>
        <taxon>Synechocystis</taxon>
    </lineage>
</organism>
<proteinExistence type="inferred from homology"/>
<protein>
    <recommendedName>
        <fullName evidence="1">Probable dual-specificity RNA methyltransferase RlmN</fullName>
        <ecNumber evidence="1">2.1.1.192</ecNumber>
    </recommendedName>
    <alternativeName>
        <fullName evidence="1">23S rRNA (adenine(2503)-C(2))-methyltransferase</fullName>
    </alternativeName>
    <alternativeName>
        <fullName evidence="1">23S rRNA m2A2503 methyltransferase</fullName>
    </alternativeName>
    <alternativeName>
        <fullName evidence="1">Ribosomal RNA large subunit methyltransferase N</fullName>
    </alternativeName>
    <alternativeName>
        <fullName evidence="1">tRNA (adenine(37)-C(2))-methyltransferase</fullName>
    </alternativeName>
    <alternativeName>
        <fullName evidence="1">tRNA m2A37 methyltransferase</fullName>
    </alternativeName>
</protein>
<reference key="1">
    <citation type="journal article" date="1995" name="DNA Res.">
        <title>Sequence analysis of the genome of the unicellular cyanobacterium Synechocystis sp. strain PCC6803. I. Sequence features in the 1 Mb region from map positions 64% to 92% of the genome.</title>
        <authorList>
            <person name="Kaneko T."/>
            <person name="Tanaka A."/>
            <person name="Sato S."/>
            <person name="Kotani H."/>
            <person name="Sazuka T."/>
            <person name="Miyajima N."/>
            <person name="Sugiura M."/>
            <person name="Tabata S."/>
        </authorList>
    </citation>
    <scope>NUCLEOTIDE SEQUENCE [LARGE SCALE GENOMIC DNA]</scope>
    <source>
        <strain>ATCC 27184 / PCC 6803 / N-1</strain>
    </source>
</reference>
<reference key="2">
    <citation type="journal article" date="1996" name="DNA Res.">
        <title>Sequence analysis of the genome of the unicellular cyanobacterium Synechocystis sp. strain PCC6803. II. Sequence determination of the entire genome and assignment of potential protein-coding regions.</title>
        <authorList>
            <person name="Kaneko T."/>
            <person name="Sato S."/>
            <person name="Kotani H."/>
            <person name="Tanaka A."/>
            <person name="Asamizu E."/>
            <person name="Nakamura Y."/>
            <person name="Miyajima N."/>
            <person name="Hirosawa M."/>
            <person name="Sugiura M."/>
            <person name="Sasamoto S."/>
            <person name="Kimura T."/>
            <person name="Hosouchi T."/>
            <person name="Matsuno A."/>
            <person name="Muraki A."/>
            <person name="Nakazaki N."/>
            <person name="Naruo K."/>
            <person name="Okumura S."/>
            <person name="Shimpo S."/>
            <person name="Takeuchi C."/>
            <person name="Wada T."/>
            <person name="Watanabe A."/>
            <person name="Yamada M."/>
            <person name="Yasuda M."/>
            <person name="Tabata S."/>
        </authorList>
    </citation>
    <scope>NUCLEOTIDE SEQUENCE [LARGE SCALE GENOMIC DNA]</scope>
    <source>
        <strain>ATCC 27184 / PCC 6803 / Kazusa</strain>
    </source>
</reference>
<accession>Q55880</accession>
<keyword id="KW-0004">4Fe-4S</keyword>
<keyword id="KW-0963">Cytoplasm</keyword>
<keyword id="KW-1015">Disulfide bond</keyword>
<keyword id="KW-0408">Iron</keyword>
<keyword id="KW-0411">Iron-sulfur</keyword>
<keyword id="KW-0479">Metal-binding</keyword>
<keyword id="KW-0489">Methyltransferase</keyword>
<keyword id="KW-1185">Reference proteome</keyword>
<keyword id="KW-0698">rRNA processing</keyword>
<keyword id="KW-0949">S-adenosyl-L-methionine</keyword>
<keyword id="KW-0808">Transferase</keyword>
<keyword id="KW-0819">tRNA processing</keyword>
<feature type="chain" id="PRO_0000171930" description="Probable dual-specificity RNA methyltransferase RlmN">
    <location>
        <begin position="1"/>
        <end position="350"/>
    </location>
</feature>
<feature type="domain" description="Radical SAM core" evidence="2">
    <location>
        <begin position="99"/>
        <end position="327"/>
    </location>
</feature>
<feature type="active site" description="Proton acceptor" evidence="1">
    <location>
        <position position="93"/>
    </location>
</feature>
<feature type="active site" description="S-methylcysteine intermediate" evidence="1">
    <location>
        <position position="332"/>
    </location>
</feature>
<feature type="binding site" evidence="1">
    <location>
        <position position="113"/>
    </location>
    <ligand>
        <name>[4Fe-4S] cluster</name>
        <dbReference type="ChEBI" id="CHEBI:49883"/>
        <note>4Fe-4S-S-AdoMet</note>
    </ligand>
</feature>
<feature type="binding site" evidence="1">
    <location>
        <position position="117"/>
    </location>
    <ligand>
        <name>[4Fe-4S] cluster</name>
        <dbReference type="ChEBI" id="CHEBI:49883"/>
        <note>4Fe-4S-S-AdoMet</note>
    </ligand>
</feature>
<feature type="binding site" evidence="1">
    <location>
        <position position="120"/>
    </location>
    <ligand>
        <name>[4Fe-4S] cluster</name>
        <dbReference type="ChEBI" id="CHEBI:49883"/>
        <note>4Fe-4S-S-AdoMet</note>
    </ligand>
</feature>
<feature type="binding site" evidence="1">
    <location>
        <begin position="160"/>
        <end position="161"/>
    </location>
    <ligand>
        <name>S-adenosyl-L-methionine</name>
        <dbReference type="ChEBI" id="CHEBI:59789"/>
    </ligand>
</feature>
<feature type="binding site" evidence="1">
    <location>
        <position position="190"/>
    </location>
    <ligand>
        <name>S-adenosyl-L-methionine</name>
        <dbReference type="ChEBI" id="CHEBI:59789"/>
    </ligand>
</feature>
<feature type="binding site" evidence="1">
    <location>
        <begin position="213"/>
        <end position="215"/>
    </location>
    <ligand>
        <name>S-adenosyl-L-methionine</name>
        <dbReference type="ChEBI" id="CHEBI:59789"/>
    </ligand>
</feature>
<feature type="binding site" evidence="1">
    <location>
        <position position="289"/>
    </location>
    <ligand>
        <name>S-adenosyl-L-methionine</name>
        <dbReference type="ChEBI" id="CHEBI:59789"/>
    </ligand>
</feature>
<feature type="disulfide bond" description="(transient)" evidence="1">
    <location>
        <begin position="106"/>
        <end position="332"/>
    </location>
</feature>
<evidence type="ECO:0000255" key="1">
    <source>
        <dbReference type="HAMAP-Rule" id="MF_01849"/>
    </source>
</evidence>
<evidence type="ECO:0000255" key="2">
    <source>
        <dbReference type="PROSITE-ProRule" id="PRU01266"/>
    </source>
</evidence>